<sequence>MTQFTQNTAMPSSLWQYWRGLSGWNFYFLVKFGLLWAGYLNFHPLLNLVFAAFLLMPLPRYSLHRLRHWIALPIGFALFWHDTWLPGPESIMSQGSQVAGFSTDYLIDLVTRFINWQMIGAIFVLLVAWLFLSQWIRITVFVVAILLWLNVLTLAGPSFSLWPAGQPTTTVTTTGGNAAATVAATGGAPVVGDMPAQTAPPTTANLNAWLNNFYNAEAKRKSTFPSSLPADAQPFELLVINICSLSWSDIEAAGLMSHPLWSHFDIEFKNFNSATSYSGPAAIRLLRASCGQTSHTNLYQPANNDCYLFDNLSKLGFTQHLMMGHNGQFGGFLKEVRENGGMQSELMDQTNLPVILLGFDGSPVYDDTAVLNRWLDVTEKDKNSRSATFYNTLPLHDGNHYPGVSKTADYKARAQKFFDELDAFFTELEKSGRKVMVVVVPEHGGALKGDRMQVSGLRDIPSPSITDVPVGVKFFGMKAPHQGAPIVIEQPSSFLAISDLVVRVLDGKIFTEDNVDWKKLTSGLPQTAPVSENSNAVVIQYQDKPYVRLNGGDWVPYPQ</sequence>
<proteinExistence type="evidence at protein level"/>
<protein>
    <recommendedName>
        <fullName>Cellulose biosynthesis protein BcsG</fullName>
    </recommendedName>
</protein>
<evidence type="ECO:0000255" key="1"/>
<evidence type="ECO:0000269" key="2">
    <source>
    </source>
</evidence>
<evidence type="ECO:0000305" key="3"/>
<evidence type="ECO:0000305" key="4">
    <source>
    </source>
</evidence>
<evidence type="ECO:0007829" key="5">
    <source>
        <dbReference type="PDB" id="6PCZ"/>
    </source>
</evidence>
<evidence type="ECO:0007829" key="6">
    <source>
        <dbReference type="PDB" id="9FNN"/>
    </source>
</evidence>
<evidence type="ECO:0007829" key="7">
    <source>
        <dbReference type="PDB" id="9FP0"/>
    </source>
</evidence>
<accession>P37659</accession>
<accession>Q2M7J9</accession>
<gene>
    <name type="primary">bcsG</name>
    <name type="synonym">yhjU</name>
    <name type="ordered locus">b3538</name>
    <name type="ordered locus">JW3506</name>
</gene>
<comment type="subcellular location">
    <subcellularLocation>
        <location evidence="3">Cell inner membrane</location>
        <topology evidence="3">Multi-pass membrane protein</topology>
    </subcellularLocation>
</comment>
<comment type="disruption phenotype">
    <text evidence="2">When the bcsEFG operon is disrupted in a cellulose-synthesizing strain (a strain K12 / W3110 derivative called AR3110 with a restored, functional bcsQ gene), cellulose is no longer made.</text>
</comment>
<comment type="miscellaneous">
    <text evidence="4">Cellulose production is abolished in E.coli K12 / MG1655 and W3110 due to a premature stop codon in bcsQ (PubMed:24097954).</text>
</comment>
<feature type="chain" id="PRO_0000169584" description="Cellulose biosynthesis protein BcsG">
    <location>
        <begin position="1"/>
        <end position="559"/>
    </location>
</feature>
<feature type="transmembrane region" description="Helical" evidence="1">
    <location>
        <begin position="34"/>
        <end position="54"/>
    </location>
</feature>
<feature type="transmembrane region" description="Helical" evidence="1">
    <location>
        <begin position="68"/>
        <end position="88"/>
    </location>
</feature>
<feature type="transmembrane region" description="Helical" evidence="1">
    <location>
        <begin position="113"/>
        <end position="133"/>
    </location>
</feature>
<feature type="transmembrane region" description="Helical" evidence="1">
    <location>
        <begin position="138"/>
        <end position="158"/>
    </location>
</feature>
<feature type="helix" evidence="6">
    <location>
        <begin position="14"/>
        <end position="17"/>
    </location>
</feature>
<feature type="turn" evidence="6">
    <location>
        <begin position="22"/>
        <end position="24"/>
    </location>
</feature>
<feature type="helix" evidence="6">
    <location>
        <begin position="25"/>
        <end position="36"/>
    </location>
</feature>
<feature type="helix" evidence="6">
    <location>
        <begin position="44"/>
        <end position="55"/>
    </location>
</feature>
<feature type="helix" evidence="6">
    <location>
        <begin position="61"/>
        <end position="82"/>
    </location>
</feature>
<feature type="strand" evidence="7">
    <location>
        <begin position="83"/>
        <end position="85"/>
    </location>
</feature>
<feature type="helix" evidence="6">
    <location>
        <begin position="88"/>
        <end position="93"/>
    </location>
</feature>
<feature type="helix" evidence="6">
    <location>
        <begin position="95"/>
        <end position="100"/>
    </location>
</feature>
<feature type="helix" evidence="6">
    <location>
        <begin position="103"/>
        <end position="113"/>
    </location>
</feature>
<feature type="helix" evidence="6">
    <location>
        <begin position="116"/>
        <end position="132"/>
    </location>
</feature>
<feature type="turn" evidence="6">
    <location>
        <begin position="133"/>
        <end position="135"/>
    </location>
</feature>
<feature type="helix" evidence="6">
    <location>
        <begin position="138"/>
        <end position="154"/>
    </location>
</feature>
<feature type="helix" evidence="5">
    <location>
        <begin position="203"/>
        <end position="218"/>
    </location>
</feature>
<feature type="strand" evidence="5">
    <location>
        <begin position="236"/>
        <end position="244"/>
    </location>
</feature>
<feature type="helix" evidence="5">
    <location>
        <begin position="247"/>
        <end position="252"/>
    </location>
</feature>
<feature type="helix" evidence="5">
    <location>
        <begin position="259"/>
        <end position="262"/>
    </location>
</feature>
<feature type="strand" evidence="5">
    <location>
        <begin position="265"/>
        <end position="272"/>
    </location>
</feature>
<feature type="helix" evidence="5">
    <location>
        <begin position="278"/>
        <end position="286"/>
    </location>
</feature>
<feature type="turn" evidence="5">
    <location>
        <begin position="287"/>
        <end position="289"/>
    </location>
</feature>
<feature type="helix" evidence="5">
    <location>
        <begin position="296"/>
        <end position="299"/>
    </location>
</feature>
<feature type="helix" evidence="5">
    <location>
        <begin position="304"/>
        <end position="306"/>
    </location>
</feature>
<feature type="helix" evidence="5">
    <location>
        <begin position="308"/>
        <end position="314"/>
    </location>
</feature>
<feature type="strand" evidence="5">
    <location>
        <begin position="318"/>
        <end position="325"/>
    </location>
</feature>
<feature type="helix" evidence="5">
    <location>
        <begin position="329"/>
        <end position="331"/>
    </location>
</feature>
<feature type="helix" evidence="5">
    <location>
        <begin position="332"/>
        <end position="338"/>
    </location>
</feature>
<feature type="strand" evidence="5">
    <location>
        <begin position="354"/>
        <end position="357"/>
    </location>
</feature>
<feature type="strand" evidence="5">
    <location>
        <begin position="363"/>
        <end position="365"/>
    </location>
</feature>
<feature type="helix" evidence="5">
    <location>
        <begin position="367"/>
        <end position="379"/>
    </location>
</feature>
<feature type="strand" evidence="5">
    <location>
        <begin position="386"/>
        <end position="392"/>
    </location>
</feature>
<feature type="turn" evidence="5">
    <location>
        <begin position="402"/>
        <end position="404"/>
    </location>
</feature>
<feature type="helix" evidence="5">
    <location>
        <begin position="410"/>
        <end position="431"/>
    </location>
</feature>
<feature type="strand" evidence="5">
    <location>
        <begin position="435"/>
        <end position="441"/>
    </location>
</feature>
<feature type="strand" evidence="5">
    <location>
        <begin position="451"/>
        <end position="453"/>
    </location>
</feature>
<feature type="helix" evidence="5">
    <location>
        <begin position="463"/>
        <end position="466"/>
    </location>
</feature>
<feature type="strand" evidence="5">
    <location>
        <begin position="467"/>
        <end position="476"/>
    </location>
</feature>
<feature type="strand" evidence="5">
    <location>
        <begin position="486"/>
        <end position="488"/>
    </location>
</feature>
<feature type="helix" evidence="5">
    <location>
        <begin position="494"/>
        <end position="504"/>
    </location>
</feature>
<feature type="helix" evidence="5">
    <location>
        <begin position="508"/>
        <end position="510"/>
    </location>
</feature>
<feature type="helix" evidence="5">
    <location>
        <begin position="517"/>
        <end position="521"/>
    </location>
</feature>
<feature type="strand" evidence="5">
    <location>
        <begin position="531"/>
        <end position="533"/>
    </location>
</feature>
<feature type="strand" evidence="5">
    <location>
        <begin position="536"/>
        <end position="541"/>
    </location>
</feature>
<feature type="strand" evidence="5">
    <location>
        <begin position="544"/>
        <end position="549"/>
    </location>
</feature>
<feature type="strand" evidence="5">
    <location>
        <begin position="554"/>
        <end position="556"/>
    </location>
</feature>
<name>BCSG_ECOLI</name>
<organism>
    <name type="scientific">Escherichia coli (strain K12)</name>
    <dbReference type="NCBI Taxonomy" id="83333"/>
    <lineage>
        <taxon>Bacteria</taxon>
        <taxon>Pseudomonadati</taxon>
        <taxon>Pseudomonadota</taxon>
        <taxon>Gammaproteobacteria</taxon>
        <taxon>Enterobacterales</taxon>
        <taxon>Enterobacteriaceae</taxon>
        <taxon>Escherichia</taxon>
    </lineage>
</organism>
<reference key="1">
    <citation type="journal article" date="1994" name="Nucleic Acids Res.">
        <title>Analysis of the Escherichia coli genome. V. DNA sequence of the region from 76.0 to 81.5 minutes.</title>
        <authorList>
            <person name="Sofia H.J."/>
            <person name="Burland V."/>
            <person name="Daniels D.L."/>
            <person name="Plunkett G. III"/>
            <person name="Blattner F.R."/>
        </authorList>
    </citation>
    <scope>NUCLEOTIDE SEQUENCE [LARGE SCALE GENOMIC DNA]</scope>
    <source>
        <strain>K12 / MG1655 / ATCC 47076</strain>
    </source>
</reference>
<reference key="2">
    <citation type="journal article" date="1997" name="Science">
        <title>The complete genome sequence of Escherichia coli K-12.</title>
        <authorList>
            <person name="Blattner F.R."/>
            <person name="Plunkett G. III"/>
            <person name="Bloch C.A."/>
            <person name="Perna N.T."/>
            <person name="Burland V."/>
            <person name="Riley M."/>
            <person name="Collado-Vides J."/>
            <person name="Glasner J.D."/>
            <person name="Rode C.K."/>
            <person name="Mayhew G.F."/>
            <person name="Gregor J."/>
            <person name="Davis N.W."/>
            <person name="Kirkpatrick H.A."/>
            <person name="Goeden M.A."/>
            <person name="Rose D.J."/>
            <person name="Mau B."/>
            <person name="Shao Y."/>
        </authorList>
    </citation>
    <scope>NUCLEOTIDE SEQUENCE [LARGE SCALE GENOMIC DNA]</scope>
    <source>
        <strain>K12 / MG1655 / ATCC 47076</strain>
    </source>
</reference>
<reference key="3">
    <citation type="journal article" date="2006" name="Mol. Syst. Biol.">
        <title>Highly accurate genome sequences of Escherichia coli K-12 strains MG1655 and W3110.</title>
        <authorList>
            <person name="Hayashi K."/>
            <person name="Morooka N."/>
            <person name="Yamamoto Y."/>
            <person name="Fujita K."/>
            <person name="Isono K."/>
            <person name="Choi S."/>
            <person name="Ohtsubo E."/>
            <person name="Baba T."/>
            <person name="Wanner B.L."/>
            <person name="Mori H."/>
            <person name="Horiuchi T."/>
        </authorList>
    </citation>
    <scope>NUCLEOTIDE SEQUENCE [LARGE SCALE GENOMIC DNA]</scope>
    <source>
        <strain>K12 / W3110 / ATCC 27325 / DSM 5911</strain>
    </source>
</reference>
<reference key="4">
    <citation type="journal article" date="2013" name="J. Bacteriol.">
        <title>Cellulose as an architectural element in spatially structured Escherichia coli biofilms.</title>
        <authorList>
            <person name="Serra D.O."/>
            <person name="Richter A.M."/>
            <person name="Hengge R."/>
        </authorList>
    </citation>
    <scope>DISRUPTION PHENOTYPE</scope>
    <source>
        <strain>K12 / W3110 / AR3110</strain>
    </source>
</reference>
<dbReference type="EMBL" id="U00039">
    <property type="protein sequence ID" value="AAB18516.1"/>
    <property type="molecule type" value="Genomic_DNA"/>
</dbReference>
<dbReference type="EMBL" id="U00096">
    <property type="protein sequence ID" value="AAC76563.1"/>
    <property type="molecule type" value="Genomic_DNA"/>
</dbReference>
<dbReference type="EMBL" id="AP009048">
    <property type="protein sequence ID" value="BAE77757.1"/>
    <property type="molecule type" value="Genomic_DNA"/>
</dbReference>
<dbReference type="PIR" id="S47760">
    <property type="entry name" value="S47760"/>
</dbReference>
<dbReference type="RefSeq" id="NP_417995.1">
    <property type="nucleotide sequence ID" value="NC_000913.3"/>
</dbReference>
<dbReference type="RefSeq" id="WP_000191622.1">
    <property type="nucleotide sequence ID" value="NZ_LN832404.1"/>
</dbReference>
<dbReference type="PDB" id="6PCZ">
    <property type="method" value="X-ray"/>
    <property type="resolution" value="1.44 A"/>
    <property type="chains" value="A/B=164-559"/>
</dbReference>
<dbReference type="PDB" id="6PD0">
    <property type="method" value="X-ray"/>
    <property type="resolution" value="1.75 A"/>
    <property type="chains" value="A/B=164-559"/>
</dbReference>
<dbReference type="PDB" id="9B8V">
    <property type="method" value="EM"/>
    <property type="resolution" value="4.00 A"/>
    <property type="chains" value="B/C/D=1-559"/>
</dbReference>
<dbReference type="PDB" id="9FMV">
    <property type="method" value="EM"/>
    <property type="resolution" value="3.43 A"/>
    <property type="chains" value="B/C/D=1-524"/>
</dbReference>
<dbReference type="PDB" id="9FMZ">
    <property type="method" value="EM"/>
    <property type="resolution" value="3.60 A"/>
    <property type="chains" value="C/D/G=1-524"/>
</dbReference>
<dbReference type="PDB" id="9FNN">
    <property type="method" value="EM"/>
    <property type="resolution" value="2.85 A"/>
    <property type="chains" value="D/G=1-524"/>
</dbReference>
<dbReference type="PDB" id="9FP0">
    <property type="method" value="EM"/>
    <property type="resolution" value="3.37 A"/>
    <property type="chains" value="G/J/K=1-524"/>
</dbReference>
<dbReference type="PDBsum" id="6PCZ"/>
<dbReference type="PDBsum" id="6PD0"/>
<dbReference type="PDBsum" id="9B8V"/>
<dbReference type="PDBsum" id="9FMV"/>
<dbReference type="PDBsum" id="9FMZ"/>
<dbReference type="PDBsum" id="9FNN"/>
<dbReference type="PDBsum" id="9FP0"/>
<dbReference type="EMDB" id="EMD-44359"/>
<dbReference type="SMR" id="P37659"/>
<dbReference type="BioGRID" id="4263173">
    <property type="interactions" value="2"/>
</dbReference>
<dbReference type="DIP" id="DIP-12392N"/>
<dbReference type="FunCoup" id="P37659">
    <property type="interactions" value="18"/>
</dbReference>
<dbReference type="IntAct" id="P37659">
    <property type="interactions" value="3"/>
</dbReference>
<dbReference type="STRING" id="511145.b3538"/>
<dbReference type="TCDB" id="9.B.275.1.1">
    <property type="family name" value="the phosphoethanolamine transferase (peat) family"/>
</dbReference>
<dbReference type="jPOST" id="P37659"/>
<dbReference type="PaxDb" id="511145-b3538"/>
<dbReference type="EnsemblBacteria" id="AAC76563">
    <property type="protein sequence ID" value="AAC76563"/>
    <property type="gene ID" value="b3538"/>
</dbReference>
<dbReference type="GeneID" id="948058"/>
<dbReference type="KEGG" id="ecj:JW3506"/>
<dbReference type="KEGG" id="eco:b3538"/>
<dbReference type="KEGG" id="ecoc:C3026_19165"/>
<dbReference type="PATRIC" id="fig|1411691.4.peg.3178"/>
<dbReference type="EchoBASE" id="EB2174"/>
<dbReference type="eggNOG" id="COG2194">
    <property type="taxonomic scope" value="Bacteria"/>
</dbReference>
<dbReference type="HOGENOM" id="CLU_024049_1_0_6"/>
<dbReference type="InParanoid" id="P37659"/>
<dbReference type="OMA" id="GDKMQMS"/>
<dbReference type="OrthoDB" id="6965261at2"/>
<dbReference type="PhylomeDB" id="P37659"/>
<dbReference type="BioCyc" id="EcoCyc:EG12265-MONOMER"/>
<dbReference type="BioCyc" id="MetaCyc:EG12265-MONOMER"/>
<dbReference type="PRO" id="PR:P37659"/>
<dbReference type="Proteomes" id="UP000000625">
    <property type="component" value="Chromosome"/>
</dbReference>
<dbReference type="GO" id="GO:0005886">
    <property type="term" value="C:plasma membrane"/>
    <property type="evidence" value="ECO:0000314"/>
    <property type="project" value="EcoCyc"/>
</dbReference>
<dbReference type="GO" id="GO:0030244">
    <property type="term" value="P:cellulose biosynthetic process"/>
    <property type="evidence" value="ECO:0007669"/>
    <property type="project" value="UniProtKB-KW"/>
</dbReference>
<dbReference type="InterPro" id="IPR017744">
    <property type="entry name" value="BcsG"/>
</dbReference>
<dbReference type="NCBIfam" id="TIGR03368">
    <property type="entry name" value="cellulose_yhjU"/>
    <property type="match status" value="1"/>
</dbReference>
<dbReference type="Pfam" id="PF11658">
    <property type="entry name" value="CBP_BcsG"/>
    <property type="match status" value="1"/>
</dbReference>
<keyword id="KW-0002">3D-structure</keyword>
<keyword id="KW-0997">Cell inner membrane</keyword>
<keyword id="KW-1003">Cell membrane</keyword>
<keyword id="KW-0135">Cellulose biosynthesis</keyword>
<keyword id="KW-0472">Membrane</keyword>
<keyword id="KW-1185">Reference proteome</keyword>
<keyword id="KW-0812">Transmembrane</keyword>
<keyword id="KW-1133">Transmembrane helix</keyword>